<keyword id="KW-1185">Reference proteome</keyword>
<keyword id="KW-0687">Ribonucleoprotein</keyword>
<keyword id="KW-0689">Ribosomal protein</keyword>
<name>RL34_CYTH3</name>
<feature type="chain" id="PRO_1000013328" description="Large ribosomal subunit protein bL34">
    <location>
        <begin position="1"/>
        <end position="52"/>
    </location>
</feature>
<feature type="region of interest" description="Disordered" evidence="2">
    <location>
        <begin position="1"/>
        <end position="52"/>
    </location>
</feature>
<feature type="compositionally biased region" description="Basic residues" evidence="2">
    <location>
        <begin position="1"/>
        <end position="19"/>
    </location>
</feature>
<feature type="compositionally biased region" description="Basic residues" evidence="2">
    <location>
        <begin position="31"/>
        <end position="42"/>
    </location>
</feature>
<feature type="compositionally biased region" description="Basic and acidic residues" evidence="2">
    <location>
        <begin position="43"/>
        <end position="52"/>
    </location>
</feature>
<dbReference type="EMBL" id="CP000383">
    <property type="protein sequence ID" value="ABG57390.1"/>
    <property type="molecule type" value="Genomic_DNA"/>
</dbReference>
<dbReference type="RefSeq" id="WP_011583506.1">
    <property type="nucleotide sequence ID" value="NC_008255.1"/>
</dbReference>
<dbReference type="SMR" id="Q11YX6"/>
<dbReference type="STRING" id="269798.CHU_0096"/>
<dbReference type="KEGG" id="chu:CHU_0096"/>
<dbReference type="eggNOG" id="COG0230">
    <property type="taxonomic scope" value="Bacteria"/>
</dbReference>
<dbReference type="HOGENOM" id="CLU_129938_2_0_10"/>
<dbReference type="Proteomes" id="UP000001822">
    <property type="component" value="Chromosome"/>
</dbReference>
<dbReference type="GO" id="GO:1990904">
    <property type="term" value="C:ribonucleoprotein complex"/>
    <property type="evidence" value="ECO:0007669"/>
    <property type="project" value="UniProtKB-KW"/>
</dbReference>
<dbReference type="GO" id="GO:0005840">
    <property type="term" value="C:ribosome"/>
    <property type="evidence" value="ECO:0007669"/>
    <property type="project" value="UniProtKB-KW"/>
</dbReference>
<dbReference type="GO" id="GO:0003735">
    <property type="term" value="F:structural constituent of ribosome"/>
    <property type="evidence" value="ECO:0007669"/>
    <property type="project" value="InterPro"/>
</dbReference>
<dbReference type="GO" id="GO:0006412">
    <property type="term" value="P:translation"/>
    <property type="evidence" value="ECO:0007669"/>
    <property type="project" value="UniProtKB-UniRule"/>
</dbReference>
<dbReference type="FunFam" id="1.10.287.3980:FF:000001">
    <property type="entry name" value="Mitochondrial ribosomal protein L34"/>
    <property type="match status" value="1"/>
</dbReference>
<dbReference type="Gene3D" id="1.10.287.3980">
    <property type="match status" value="1"/>
</dbReference>
<dbReference type="HAMAP" id="MF_00391">
    <property type="entry name" value="Ribosomal_bL34"/>
    <property type="match status" value="1"/>
</dbReference>
<dbReference type="InterPro" id="IPR000271">
    <property type="entry name" value="Ribosomal_bL34"/>
</dbReference>
<dbReference type="InterPro" id="IPR020939">
    <property type="entry name" value="Ribosomal_bL34_CS"/>
</dbReference>
<dbReference type="NCBIfam" id="TIGR01030">
    <property type="entry name" value="rpmH_bact"/>
    <property type="match status" value="1"/>
</dbReference>
<dbReference type="PANTHER" id="PTHR14503:SF4">
    <property type="entry name" value="LARGE RIBOSOMAL SUBUNIT PROTEIN BL34M"/>
    <property type="match status" value="1"/>
</dbReference>
<dbReference type="PANTHER" id="PTHR14503">
    <property type="entry name" value="MITOCHONDRIAL RIBOSOMAL PROTEIN 34 FAMILY MEMBER"/>
    <property type="match status" value="1"/>
</dbReference>
<dbReference type="Pfam" id="PF00468">
    <property type="entry name" value="Ribosomal_L34"/>
    <property type="match status" value="1"/>
</dbReference>
<dbReference type="PROSITE" id="PS00784">
    <property type="entry name" value="RIBOSOMAL_L34"/>
    <property type="match status" value="1"/>
</dbReference>
<proteinExistence type="inferred from homology"/>
<reference key="1">
    <citation type="journal article" date="2007" name="Appl. Environ. Microbiol.">
        <title>Genome sequence of the cellulolytic gliding bacterium Cytophaga hutchinsonii.</title>
        <authorList>
            <person name="Xie G."/>
            <person name="Bruce D.C."/>
            <person name="Challacombe J.F."/>
            <person name="Chertkov O."/>
            <person name="Detter J.C."/>
            <person name="Gilna P."/>
            <person name="Han C.S."/>
            <person name="Lucas S."/>
            <person name="Misra M."/>
            <person name="Myers G.L."/>
            <person name="Richardson P."/>
            <person name="Tapia R."/>
            <person name="Thayer N."/>
            <person name="Thompson L.S."/>
            <person name="Brettin T.S."/>
            <person name="Henrissat B."/>
            <person name="Wilson D.B."/>
            <person name="McBride M.J."/>
        </authorList>
    </citation>
    <scope>NUCLEOTIDE SEQUENCE [LARGE SCALE GENOMIC DNA]</scope>
    <source>
        <strain>ATCC 33406 / DSM 1761 / JCM 20678 / CIP 103989 / IAM 12607 / NBRC 15051 / NCIMB 9469 / D465</strain>
    </source>
</reference>
<organism>
    <name type="scientific">Cytophaga hutchinsonii (strain ATCC 33406 / DSM 1761 / CIP 103989 / NBRC 15051 / NCIMB 9469 / D465)</name>
    <dbReference type="NCBI Taxonomy" id="269798"/>
    <lineage>
        <taxon>Bacteria</taxon>
        <taxon>Pseudomonadati</taxon>
        <taxon>Bacteroidota</taxon>
        <taxon>Cytophagia</taxon>
        <taxon>Cytophagales</taxon>
        <taxon>Cytophagaceae</taxon>
        <taxon>Cytophaga</taxon>
    </lineage>
</organism>
<accession>Q11YX6</accession>
<protein>
    <recommendedName>
        <fullName evidence="1">Large ribosomal subunit protein bL34</fullName>
    </recommendedName>
    <alternativeName>
        <fullName evidence="3">50S ribosomal protein L34</fullName>
    </alternativeName>
</protein>
<comment type="similarity">
    <text evidence="1">Belongs to the bacterial ribosomal protein bL34 family.</text>
</comment>
<evidence type="ECO:0000255" key="1">
    <source>
        <dbReference type="HAMAP-Rule" id="MF_00391"/>
    </source>
</evidence>
<evidence type="ECO:0000256" key="2">
    <source>
        <dbReference type="SAM" id="MobiDB-lite"/>
    </source>
</evidence>
<evidence type="ECO:0000305" key="3"/>
<sequence>MKRTFQPSNRKRKNKHGFRSRMETANGRRVLAARRAKGRKRLTVSDEIPRKG</sequence>
<gene>
    <name evidence="1" type="primary">rpmH</name>
    <name type="ordered locus">CHU_0096</name>
</gene>